<sequence length="249" mass="26558">MQSQRERPREDRVHEETRGADHAHPSVPHAAAAASATATETATRTMSLHAGGVVVVDGKEKGKKEEGEGKRKGKAPATAEAVRGRARLRGEQLRQLHEIFLRFDLDGDGSLTKLELAALLRSLGLRPAAGDEIHALIAAIDADGNGTVEFDELASSLADLILGPCRPSVAVDQAELAEAFRAFDRDGNGFISAAELARSMARMGHPICYAELTDMMREADTDGDGLISFEEFTAIMAKSALDFLGLAAL</sequence>
<dbReference type="EMBL" id="AP003022">
    <property type="protein sequence ID" value="BAD52664.1"/>
    <property type="molecule type" value="Genomic_DNA"/>
</dbReference>
<dbReference type="EMBL" id="AP008207">
    <property type="protein sequence ID" value="BAF05425.1"/>
    <property type="molecule type" value="Genomic_DNA"/>
</dbReference>
<dbReference type="EMBL" id="AP014957">
    <property type="protein sequence ID" value="BAS73054.1"/>
    <property type="molecule type" value="Genomic_DNA"/>
</dbReference>
<dbReference type="EMBL" id="AK064844">
    <property type="protein sequence ID" value="BAG89237.1"/>
    <property type="molecule type" value="mRNA"/>
</dbReference>
<dbReference type="RefSeq" id="XP_015621457.1">
    <property type="nucleotide sequence ID" value="XM_015765971.1"/>
</dbReference>
<dbReference type="RefSeq" id="XP_015621458.1">
    <property type="nucleotide sequence ID" value="XM_015765972.1"/>
</dbReference>
<dbReference type="RefSeq" id="XP_015621459.1">
    <property type="nucleotide sequence ID" value="XM_015765973.1"/>
</dbReference>
<dbReference type="RefSeq" id="XP_015621460.1">
    <property type="nucleotide sequence ID" value="XM_015765974.1"/>
</dbReference>
<dbReference type="SMR" id="Q5ZD81"/>
<dbReference type="FunCoup" id="Q5ZD81">
    <property type="interactions" value="155"/>
</dbReference>
<dbReference type="STRING" id="39947.Q5ZD81"/>
<dbReference type="PaxDb" id="39947-Q5ZD81"/>
<dbReference type="EnsemblPlants" id="Os01t0604500-01">
    <property type="protein sequence ID" value="Os01t0604500-01"/>
    <property type="gene ID" value="Os01g0604500"/>
</dbReference>
<dbReference type="Gramene" id="Os01t0604500-01">
    <property type="protein sequence ID" value="Os01t0604500-01"/>
    <property type="gene ID" value="Os01g0604500"/>
</dbReference>
<dbReference type="KEGG" id="dosa:Os01g0604500"/>
<dbReference type="eggNOG" id="KOG0027">
    <property type="taxonomic scope" value="Eukaryota"/>
</dbReference>
<dbReference type="HOGENOM" id="CLU_061288_2_2_1"/>
<dbReference type="InParanoid" id="Q5ZD81"/>
<dbReference type="OMA" id="PREDRVH"/>
<dbReference type="OrthoDB" id="26525at2759"/>
<dbReference type="Proteomes" id="UP000000763">
    <property type="component" value="Chromosome 1"/>
</dbReference>
<dbReference type="Proteomes" id="UP000059680">
    <property type="component" value="Chromosome 1"/>
</dbReference>
<dbReference type="GO" id="GO:0005509">
    <property type="term" value="F:calcium ion binding"/>
    <property type="evidence" value="ECO:0007669"/>
    <property type="project" value="InterPro"/>
</dbReference>
<dbReference type="CDD" id="cd00051">
    <property type="entry name" value="EFh"/>
    <property type="match status" value="1"/>
</dbReference>
<dbReference type="FunFam" id="1.10.238.10:FF:000181">
    <property type="entry name" value="CALML5 isoform 1"/>
    <property type="match status" value="1"/>
</dbReference>
<dbReference type="FunFam" id="1.10.238.10:FF:000600">
    <property type="entry name" value="Probable calcium-binding protein CML12"/>
    <property type="match status" value="1"/>
</dbReference>
<dbReference type="Gene3D" id="1.10.238.10">
    <property type="entry name" value="EF-hand"/>
    <property type="match status" value="2"/>
</dbReference>
<dbReference type="InterPro" id="IPR051111">
    <property type="entry name" value="Ca-binding_regulatory"/>
</dbReference>
<dbReference type="InterPro" id="IPR011992">
    <property type="entry name" value="EF-hand-dom_pair"/>
</dbReference>
<dbReference type="InterPro" id="IPR018247">
    <property type="entry name" value="EF_Hand_1_Ca_BS"/>
</dbReference>
<dbReference type="InterPro" id="IPR002048">
    <property type="entry name" value="EF_hand_dom"/>
</dbReference>
<dbReference type="PANTHER" id="PTHR46311">
    <property type="entry name" value="CALCIUM-BINDING PROTEIN 8-RELATED"/>
    <property type="match status" value="1"/>
</dbReference>
<dbReference type="PANTHER" id="PTHR46311:SF5">
    <property type="entry name" value="EF-HAND DOMAIN-CONTAINING PROTEIN"/>
    <property type="match status" value="1"/>
</dbReference>
<dbReference type="Pfam" id="PF13499">
    <property type="entry name" value="EF-hand_7"/>
    <property type="match status" value="2"/>
</dbReference>
<dbReference type="SMART" id="SM00054">
    <property type="entry name" value="EFh"/>
    <property type="match status" value="4"/>
</dbReference>
<dbReference type="SUPFAM" id="SSF47473">
    <property type="entry name" value="EF-hand"/>
    <property type="match status" value="1"/>
</dbReference>
<dbReference type="PROSITE" id="PS00018">
    <property type="entry name" value="EF_HAND_1"/>
    <property type="match status" value="4"/>
</dbReference>
<dbReference type="PROSITE" id="PS50222">
    <property type="entry name" value="EF_HAND_2"/>
    <property type="match status" value="4"/>
</dbReference>
<accession>Q5ZD81</accession>
<accession>B7EA40</accession>
<proteinExistence type="evidence at transcript level"/>
<gene>
    <name type="primary">CML12</name>
    <name type="ordered locus">Os01g0604500</name>
    <name type="ordered locus">LOC_Os01g41990</name>
    <name type="ORF">P0681B11.28</name>
</gene>
<comment type="function">
    <text evidence="1">Potential calcium sensor.</text>
</comment>
<comment type="caution">
    <text evidence="4">Although assigned as a calmodulin family member by PubMed:17263873, it only contains EF-hand domains.</text>
</comment>
<protein>
    <recommendedName>
        <fullName>Probable calcium-binding protein CML12</fullName>
    </recommendedName>
    <alternativeName>
        <fullName>Calmodulin-like protein 12</fullName>
    </alternativeName>
</protein>
<name>CML12_ORYSJ</name>
<keyword id="KW-0106">Calcium</keyword>
<keyword id="KW-0479">Metal-binding</keyword>
<keyword id="KW-1185">Reference proteome</keyword>
<keyword id="KW-0677">Repeat</keyword>
<evidence type="ECO:0000250" key="1"/>
<evidence type="ECO:0000255" key="2">
    <source>
        <dbReference type="PROSITE-ProRule" id="PRU00448"/>
    </source>
</evidence>
<evidence type="ECO:0000256" key="3">
    <source>
        <dbReference type="SAM" id="MobiDB-lite"/>
    </source>
</evidence>
<evidence type="ECO:0000305" key="4"/>
<reference key="1">
    <citation type="journal article" date="2002" name="Nature">
        <title>The genome sequence and structure of rice chromosome 1.</title>
        <authorList>
            <person name="Sasaki T."/>
            <person name="Matsumoto T."/>
            <person name="Yamamoto K."/>
            <person name="Sakata K."/>
            <person name="Baba T."/>
            <person name="Katayose Y."/>
            <person name="Wu J."/>
            <person name="Niimura Y."/>
            <person name="Cheng Z."/>
            <person name="Nagamura Y."/>
            <person name="Antonio B.A."/>
            <person name="Kanamori H."/>
            <person name="Hosokawa S."/>
            <person name="Masukawa M."/>
            <person name="Arikawa K."/>
            <person name="Chiden Y."/>
            <person name="Hayashi M."/>
            <person name="Okamoto M."/>
            <person name="Ando T."/>
            <person name="Aoki H."/>
            <person name="Arita K."/>
            <person name="Hamada M."/>
            <person name="Harada C."/>
            <person name="Hijishita S."/>
            <person name="Honda M."/>
            <person name="Ichikawa Y."/>
            <person name="Idonuma A."/>
            <person name="Iijima M."/>
            <person name="Ikeda M."/>
            <person name="Ikeno M."/>
            <person name="Ito S."/>
            <person name="Ito T."/>
            <person name="Ito Y."/>
            <person name="Ito Y."/>
            <person name="Iwabuchi A."/>
            <person name="Kamiya K."/>
            <person name="Karasawa W."/>
            <person name="Katagiri S."/>
            <person name="Kikuta A."/>
            <person name="Kobayashi N."/>
            <person name="Kono I."/>
            <person name="Machita K."/>
            <person name="Maehara T."/>
            <person name="Mizuno H."/>
            <person name="Mizubayashi T."/>
            <person name="Mukai Y."/>
            <person name="Nagasaki H."/>
            <person name="Nakashima M."/>
            <person name="Nakama Y."/>
            <person name="Nakamichi Y."/>
            <person name="Nakamura M."/>
            <person name="Namiki N."/>
            <person name="Negishi M."/>
            <person name="Ohta I."/>
            <person name="Ono N."/>
            <person name="Saji S."/>
            <person name="Sakai K."/>
            <person name="Shibata M."/>
            <person name="Shimokawa T."/>
            <person name="Shomura A."/>
            <person name="Song J."/>
            <person name="Takazaki Y."/>
            <person name="Terasawa K."/>
            <person name="Tsuji K."/>
            <person name="Waki K."/>
            <person name="Yamagata H."/>
            <person name="Yamane H."/>
            <person name="Yoshiki S."/>
            <person name="Yoshihara R."/>
            <person name="Yukawa K."/>
            <person name="Zhong H."/>
            <person name="Iwama H."/>
            <person name="Endo T."/>
            <person name="Ito H."/>
            <person name="Hahn J.H."/>
            <person name="Kim H.-I."/>
            <person name="Eun M.-Y."/>
            <person name="Yano M."/>
            <person name="Jiang J."/>
            <person name="Gojobori T."/>
        </authorList>
    </citation>
    <scope>NUCLEOTIDE SEQUENCE [LARGE SCALE GENOMIC DNA]</scope>
    <source>
        <strain>cv. Nipponbare</strain>
    </source>
</reference>
<reference key="2">
    <citation type="journal article" date="2005" name="Nature">
        <title>The map-based sequence of the rice genome.</title>
        <authorList>
            <consortium name="International rice genome sequencing project (IRGSP)"/>
        </authorList>
    </citation>
    <scope>NUCLEOTIDE SEQUENCE [LARGE SCALE GENOMIC DNA]</scope>
    <source>
        <strain>cv. Nipponbare</strain>
    </source>
</reference>
<reference key="3">
    <citation type="journal article" date="2008" name="Nucleic Acids Res.">
        <title>The rice annotation project database (RAP-DB): 2008 update.</title>
        <authorList>
            <consortium name="The rice annotation project (RAP)"/>
        </authorList>
    </citation>
    <scope>GENOME REANNOTATION</scope>
    <source>
        <strain>cv. Nipponbare</strain>
    </source>
</reference>
<reference key="4">
    <citation type="journal article" date="2013" name="Rice">
        <title>Improvement of the Oryza sativa Nipponbare reference genome using next generation sequence and optical map data.</title>
        <authorList>
            <person name="Kawahara Y."/>
            <person name="de la Bastide M."/>
            <person name="Hamilton J.P."/>
            <person name="Kanamori H."/>
            <person name="McCombie W.R."/>
            <person name="Ouyang S."/>
            <person name="Schwartz D.C."/>
            <person name="Tanaka T."/>
            <person name="Wu J."/>
            <person name="Zhou S."/>
            <person name="Childs K.L."/>
            <person name="Davidson R.M."/>
            <person name="Lin H."/>
            <person name="Quesada-Ocampo L."/>
            <person name="Vaillancourt B."/>
            <person name="Sakai H."/>
            <person name="Lee S.S."/>
            <person name="Kim J."/>
            <person name="Numa H."/>
            <person name="Itoh T."/>
            <person name="Buell C.R."/>
            <person name="Matsumoto T."/>
        </authorList>
    </citation>
    <scope>GENOME REANNOTATION</scope>
    <source>
        <strain>cv. Nipponbare</strain>
    </source>
</reference>
<reference key="5">
    <citation type="journal article" date="2003" name="Science">
        <title>Collection, mapping, and annotation of over 28,000 cDNA clones from japonica rice.</title>
        <authorList>
            <consortium name="The rice full-length cDNA consortium"/>
        </authorList>
    </citation>
    <scope>NUCLEOTIDE SEQUENCE [LARGE SCALE MRNA]</scope>
    <source>
        <strain>cv. Nipponbare</strain>
    </source>
</reference>
<reference key="6">
    <citation type="journal article" date="2007" name="BMC Plant Biol.">
        <title>Genome-wide identification and analyses of the rice calmodulin and related potential calcium sensor proteins.</title>
        <authorList>
            <person name="Boonburapong B."/>
            <person name="Buaboocha T."/>
        </authorList>
    </citation>
    <scope>GENE FAMILY</scope>
    <scope>NOMENCLATURE</scope>
</reference>
<organism>
    <name type="scientific">Oryza sativa subsp. japonica</name>
    <name type="common">Rice</name>
    <dbReference type="NCBI Taxonomy" id="39947"/>
    <lineage>
        <taxon>Eukaryota</taxon>
        <taxon>Viridiplantae</taxon>
        <taxon>Streptophyta</taxon>
        <taxon>Embryophyta</taxon>
        <taxon>Tracheophyta</taxon>
        <taxon>Spermatophyta</taxon>
        <taxon>Magnoliopsida</taxon>
        <taxon>Liliopsida</taxon>
        <taxon>Poales</taxon>
        <taxon>Poaceae</taxon>
        <taxon>BOP clade</taxon>
        <taxon>Oryzoideae</taxon>
        <taxon>Oryzeae</taxon>
        <taxon>Oryzinae</taxon>
        <taxon>Oryza</taxon>
        <taxon>Oryza sativa</taxon>
    </lineage>
</organism>
<feature type="chain" id="PRO_0000338427" description="Probable calcium-binding protein CML12">
    <location>
        <begin position="1"/>
        <end position="249"/>
    </location>
</feature>
<feature type="domain" description="EF-hand 1" evidence="2">
    <location>
        <begin position="91"/>
        <end position="126"/>
    </location>
</feature>
<feature type="domain" description="EF-hand 2" evidence="2">
    <location>
        <begin position="128"/>
        <end position="163"/>
    </location>
</feature>
<feature type="domain" description="EF-hand 3" evidence="2">
    <location>
        <begin position="171"/>
        <end position="206"/>
    </location>
</feature>
<feature type="domain" description="EF-hand 4" evidence="2">
    <location>
        <begin position="207"/>
        <end position="242"/>
    </location>
</feature>
<feature type="region of interest" description="Disordered" evidence="3">
    <location>
        <begin position="1"/>
        <end position="80"/>
    </location>
</feature>
<feature type="compositionally biased region" description="Basic and acidic residues" evidence="3">
    <location>
        <begin position="1"/>
        <end position="24"/>
    </location>
</feature>
<feature type="compositionally biased region" description="Low complexity" evidence="3">
    <location>
        <begin position="30"/>
        <end position="56"/>
    </location>
</feature>
<feature type="compositionally biased region" description="Basic and acidic residues" evidence="3">
    <location>
        <begin position="57"/>
        <end position="70"/>
    </location>
</feature>
<feature type="binding site" evidence="2">
    <location>
        <position position="104"/>
    </location>
    <ligand>
        <name>Ca(2+)</name>
        <dbReference type="ChEBI" id="CHEBI:29108"/>
        <label>1</label>
    </ligand>
</feature>
<feature type="binding site" evidence="2">
    <location>
        <position position="106"/>
    </location>
    <ligand>
        <name>Ca(2+)</name>
        <dbReference type="ChEBI" id="CHEBI:29108"/>
        <label>1</label>
    </ligand>
</feature>
<feature type="binding site" evidence="2">
    <location>
        <position position="108"/>
    </location>
    <ligand>
        <name>Ca(2+)</name>
        <dbReference type="ChEBI" id="CHEBI:29108"/>
        <label>1</label>
    </ligand>
</feature>
<feature type="binding site" evidence="2">
    <location>
        <position position="110"/>
    </location>
    <ligand>
        <name>Ca(2+)</name>
        <dbReference type="ChEBI" id="CHEBI:29108"/>
        <label>1</label>
    </ligand>
</feature>
<feature type="binding site" evidence="2">
    <location>
        <position position="115"/>
    </location>
    <ligand>
        <name>Ca(2+)</name>
        <dbReference type="ChEBI" id="CHEBI:29108"/>
        <label>1</label>
    </ligand>
</feature>
<feature type="binding site" evidence="2">
    <location>
        <position position="141"/>
    </location>
    <ligand>
        <name>Ca(2+)</name>
        <dbReference type="ChEBI" id="CHEBI:29108"/>
        <label>2</label>
    </ligand>
</feature>
<feature type="binding site" evidence="2">
    <location>
        <position position="143"/>
    </location>
    <ligand>
        <name>Ca(2+)</name>
        <dbReference type="ChEBI" id="CHEBI:29108"/>
        <label>2</label>
    </ligand>
</feature>
<feature type="binding site" evidence="2">
    <location>
        <position position="145"/>
    </location>
    <ligand>
        <name>Ca(2+)</name>
        <dbReference type="ChEBI" id="CHEBI:29108"/>
        <label>2</label>
    </ligand>
</feature>
<feature type="binding site" evidence="2">
    <location>
        <position position="147"/>
    </location>
    <ligand>
        <name>Ca(2+)</name>
        <dbReference type="ChEBI" id="CHEBI:29108"/>
        <label>2</label>
    </ligand>
</feature>
<feature type="binding site" evidence="2">
    <location>
        <position position="152"/>
    </location>
    <ligand>
        <name>Ca(2+)</name>
        <dbReference type="ChEBI" id="CHEBI:29108"/>
        <label>2</label>
    </ligand>
</feature>
<feature type="binding site" evidence="2">
    <location>
        <position position="184"/>
    </location>
    <ligand>
        <name>Ca(2+)</name>
        <dbReference type="ChEBI" id="CHEBI:29108"/>
        <label>3</label>
    </ligand>
</feature>
<feature type="binding site" evidence="2">
    <location>
        <position position="186"/>
    </location>
    <ligand>
        <name>Ca(2+)</name>
        <dbReference type="ChEBI" id="CHEBI:29108"/>
        <label>3</label>
    </ligand>
</feature>
<feature type="binding site" evidence="2">
    <location>
        <position position="188"/>
    </location>
    <ligand>
        <name>Ca(2+)</name>
        <dbReference type="ChEBI" id="CHEBI:29108"/>
        <label>3</label>
    </ligand>
</feature>
<feature type="binding site" evidence="2">
    <location>
        <position position="195"/>
    </location>
    <ligand>
        <name>Ca(2+)</name>
        <dbReference type="ChEBI" id="CHEBI:29108"/>
        <label>3</label>
    </ligand>
</feature>
<feature type="binding site" evidence="2">
    <location>
        <position position="220"/>
    </location>
    <ligand>
        <name>Ca(2+)</name>
        <dbReference type="ChEBI" id="CHEBI:29108"/>
        <label>4</label>
    </ligand>
</feature>
<feature type="binding site" evidence="2">
    <location>
        <position position="222"/>
    </location>
    <ligand>
        <name>Ca(2+)</name>
        <dbReference type="ChEBI" id="CHEBI:29108"/>
        <label>4</label>
    </ligand>
</feature>
<feature type="binding site" evidence="2">
    <location>
        <position position="224"/>
    </location>
    <ligand>
        <name>Ca(2+)</name>
        <dbReference type="ChEBI" id="CHEBI:29108"/>
        <label>4</label>
    </ligand>
</feature>
<feature type="binding site" evidence="2">
    <location>
        <position position="231"/>
    </location>
    <ligand>
        <name>Ca(2+)</name>
        <dbReference type="ChEBI" id="CHEBI:29108"/>
        <label>4</label>
    </ligand>
</feature>